<comment type="function">
    <text evidence="1">Required during maturation of the 40S ribosomal subunit in the nucleolus.</text>
</comment>
<comment type="subcellular location">
    <subcellularLocation>
        <location evidence="1">Nucleus</location>
        <location evidence="1">Nucleolus</location>
    </subcellularLocation>
</comment>
<comment type="alternative products">
    <event type="alternative splicing"/>
    <isoform>
        <id>Q5SWD9-1</id>
        <name>1</name>
        <sequence type="displayed"/>
    </isoform>
    <isoform>
        <id>Q5SWD9-2</id>
        <name>2</name>
        <sequence type="described" ref="VSP_029504"/>
    </isoform>
    <isoform>
        <id>Q5SWD9-3</id>
        <name>3</name>
        <sequence type="described" ref="VSP_029505 VSP_029506"/>
    </isoform>
</comment>
<comment type="similarity">
    <text evidence="5">Belongs to the TRAFAC class translation factor GTPase superfamily. Bms1-like GTPase family. TSR1 subfamily.</text>
</comment>
<comment type="sequence caution" evidence="5">
    <conflict type="erroneous initiation">
        <sequence resource="EMBL-CDS" id="AAH31531"/>
    </conflict>
    <text>Truncated N-terminus.</text>
</comment>
<comment type="sequence caution" evidence="5">
    <conflict type="frameshift">
        <sequence resource="EMBL-CDS" id="AAH31531"/>
    </conflict>
</comment>
<name>TSR1_MOUSE</name>
<feature type="chain" id="PRO_0000311275" description="Pre-rRNA-processing protein TSR1 homolog">
    <location>
        <begin position="1"/>
        <end position="803"/>
    </location>
</feature>
<feature type="domain" description="Bms1-type G" evidence="2">
    <location>
        <begin position="81"/>
        <end position="242"/>
    </location>
</feature>
<feature type="region of interest" description="Disordered" evidence="3">
    <location>
        <begin position="1"/>
        <end position="83"/>
    </location>
</feature>
<feature type="region of interest" description="Disordered" evidence="3">
    <location>
        <begin position="428"/>
        <end position="447"/>
    </location>
</feature>
<feature type="compositionally biased region" description="Basic residues" evidence="3">
    <location>
        <begin position="13"/>
        <end position="23"/>
    </location>
</feature>
<feature type="compositionally biased region" description="Basic and acidic residues" evidence="3">
    <location>
        <begin position="65"/>
        <end position="76"/>
    </location>
</feature>
<feature type="compositionally biased region" description="Acidic residues" evidence="3">
    <location>
        <begin position="428"/>
        <end position="445"/>
    </location>
</feature>
<feature type="splice variant" id="VSP_029504" description="In isoform 2." evidence="4">
    <location>
        <begin position="1"/>
        <end position="122"/>
    </location>
</feature>
<feature type="splice variant" id="VSP_029505" description="In isoform 3." evidence="4">
    <original>DL</original>
    <variation>GQ</variation>
    <location>
        <begin position="381"/>
        <end position="382"/>
    </location>
</feature>
<feature type="splice variant" id="VSP_029506" description="In isoform 3." evidence="4">
    <location>
        <begin position="383"/>
        <end position="803"/>
    </location>
</feature>
<feature type="sequence conflict" description="In Ref. 3; AAH31531." evidence="5" ref="3">
    <original>M</original>
    <variation>T</variation>
    <location>
        <position position="210"/>
    </location>
</feature>
<feature type="sequence conflict" description="In Ref. 3; AAH31531." evidence="5" ref="3">
    <original>P</original>
    <variation>A</variation>
    <location>
        <position position="335"/>
    </location>
</feature>
<feature type="sequence conflict" description="In Ref. 1; BAE37023." evidence="5" ref="1">
    <original>E</original>
    <variation>K</variation>
    <location>
        <position position="438"/>
    </location>
</feature>
<feature type="sequence conflict" description="In Ref. 3; AAH31531." evidence="5" ref="3">
    <original>A</original>
    <variation>E</variation>
    <location>
        <position position="464"/>
    </location>
</feature>
<feature type="sequence conflict" description="In Ref. 3; AAH31531." evidence="5" ref="3">
    <original>F</original>
    <variation>L</variation>
    <location>
        <position position="649"/>
    </location>
</feature>
<feature type="sequence conflict" description="In Ref. 1; BAE32349." evidence="5" ref="1">
    <original>T</original>
    <variation>N</variation>
    <location>
        <position position="707"/>
    </location>
</feature>
<keyword id="KW-0025">Alternative splicing</keyword>
<keyword id="KW-0539">Nucleus</keyword>
<keyword id="KW-1185">Reference proteome</keyword>
<keyword id="KW-0690">Ribosome biogenesis</keyword>
<protein>
    <recommendedName>
        <fullName>Pre-rRNA-processing protein TSR1 homolog</fullName>
    </recommendedName>
</protein>
<proteinExistence type="evidence at protein level"/>
<dbReference type="EMBL" id="AK030545">
    <property type="protein sequence ID" value="BAE20453.1"/>
    <property type="molecule type" value="mRNA"/>
</dbReference>
<dbReference type="EMBL" id="AK134365">
    <property type="protein sequence ID" value="BAE22117.1"/>
    <property type="molecule type" value="mRNA"/>
</dbReference>
<dbReference type="EMBL" id="AK154063">
    <property type="protein sequence ID" value="BAE32349.1"/>
    <property type="molecule type" value="mRNA"/>
</dbReference>
<dbReference type="EMBL" id="AK162686">
    <property type="protein sequence ID" value="BAE37023.1"/>
    <property type="molecule type" value="mRNA"/>
</dbReference>
<dbReference type="EMBL" id="AK165662">
    <property type="protein sequence ID" value="BAE38324.1"/>
    <property type="molecule type" value="mRNA"/>
</dbReference>
<dbReference type="EMBL" id="AL604066">
    <property type="status" value="NOT_ANNOTATED_CDS"/>
    <property type="molecule type" value="Genomic_DNA"/>
</dbReference>
<dbReference type="EMBL" id="BC031531">
    <property type="protein sequence ID" value="AAH31531.1"/>
    <property type="status" value="ALT_SEQ"/>
    <property type="molecule type" value="mRNA"/>
</dbReference>
<dbReference type="EMBL" id="AK129350">
    <property type="protein sequence ID" value="BAC98160.1"/>
    <property type="molecule type" value="mRNA"/>
</dbReference>
<dbReference type="CCDS" id="CCDS36225.1">
    <molecule id="Q5SWD9-1"/>
</dbReference>
<dbReference type="RefSeq" id="NP_796299.2">
    <molecule id="Q5SWD9-1"/>
    <property type="nucleotide sequence ID" value="NM_177325.3"/>
</dbReference>
<dbReference type="SMR" id="Q5SWD9"/>
<dbReference type="BioGRID" id="222666">
    <property type="interactions" value="4"/>
</dbReference>
<dbReference type="FunCoup" id="Q5SWD9">
    <property type="interactions" value="1075"/>
</dbReference>
<dbReference type="IntAct" id="Q5SWD9">
    <property type="interactions" value="2"/>
</dbReference>
<dbReference type="STRING" id="10090.ENSMUSP00000039027"/>
<dbReference type="GlyGen" id="Q5SWD9">
    <property type="glycosylation" value="1 site, 1 O-linked glycan (1 site)"/>
</dbReference>
<dbReference type="iPTMnet" id="Q5SWD9"/>
<dbReference type="PhosphoSitePlus" id="Q5SWD9"/>
<dbReference type="SwissPalm" id="Q5SWD9"/>
<dbReference type="PaxDb" id="10090-ENSMUSP00000039027"/>
<dbReference type="PeptideAtlas" id="Q5SWD9"/>
<dbReference type="ProteomicsDB" id="300139">
    <molecule id="Q5SWD9-1"/>
</dbReference>
<dbReference type="ProteomicsDB" id="300140">
    <molecule id="Q5SWD9-2"/>
</dbReference>
<dbReference type="ProteomicsDB" id="300141">
    <molecule id="Q5SWD9-3"/>
</dbReference>
<dbReference type="Pumba" id="Q5SWD9"/>
<dbReference type="Antibodypedia" id="10721">
    <property type="antibodies" value="109 antibodies from 23 providers"/>
</dbReference>
<dbReference type="Ensembl" id="ENSMUST00000045807.14">
    <molecule id="Q5SWD9-1"/>
    <property type="protein sequence ID" value="ENSMUSP00000039027.8"/>
    <property type="gene ID" value="ENSMUSG00000038335.14"/>
</dbReference>
<dbReference type="GeneID" id="104662"/>
<dbReference type="KEGG" id="mmu:104662"/>
<dbReference type="UCSC" id="uc007kcm.1">
    <molecule id="Q5SWD9-3"/>
    <property type="organism name" value="mouse"/>
</dbReference>
<dbReference type="UCSC" id="uc007kcn.1">
    <molecule id="Q5SWD9-1"/>
    <property type="organism name" value="mouse"/>
</dbReference>
<dbReference type="AGR" id="MGI:2144566"/>
<dbReference type="CTD" id="55720"/>
<dbReference type="MGI" id="MGI:2144566">
    <property type="gene designation" value="Tsr1"/>
</dbReference>
<dbReference type="VEuPathDB" id="HostDB:ENSMUSG00000038335"/>
<dbReference type="eggNOG" id="KOG1980">
    <property type="taxonomic scope" value="Eukaryota"/>
</dbReference>
<dbReference type="GeneTree" id="ENSGT00940000153195"/>
<dbReference type="HOGENOM" id="CLU_009858_1_0_1"/>
<dbReference type="InParanoid" id="Q5SWD9"/>
<dbReference type="OMA" id="MNLPRFK"/>
<dbReference type="OrthoDB" id="119302at2759"/>
<dbReference type="PhylomeDB" id="Q5SWD9"/>
<dbReference type="TreeFam" id="TF105717"/>
<dbReference type="Reactome" id="R-MMU-6791226">
    <property type="pathway name" value="Major pathway of rRNA processing in the nucleolus and cytosol"/>
</dbReference>
<dbReference type="BioGRID-ORCS" id="104662">
    <property type="hits" value="25 hits in 80 CRISPR screens"/>
</dbReference>
<dbReference type="ChiTaRS" id="Tsr1">
    <property type="organism name" value="mouse"/>
</dbReference>
<dbReference type="PRO" id="PR:Q5SWD9"/>
<dbReference type="Proteomes" id="UP000000589">
    <property type="component" value="Chromosome 11"/>
</dbReference>
<dbReference type="RNAct" id="Q5SWD9">
    <property type="molecule type" value="protein"/>
</dbReference>
<dbReference type="Bgee" id="ENSMUSG00000038335">
    <property type="expression patterns" value="Expressed in primitive streak and 255 other cell types or tissues"/>
</dbReference>
<dbReference type="ExpressionAtlas" id="Q5SWD9">
    <property type="expression patterns" value="baseline and differential"/>
</dbReference>
<dbReference type="GO" id="GO:0005730">
    <property type="term" value="C:nucleolus"/>
    <property type="evidence" value="ECO:0000250"/>
    <property type="project" value="UniProtKB"/>
</dbReference>
<dbReference type="GO" id="GO:0042254">
    <property type="term" value="P:ribosome biogenesis"/>
    <property type="evidence" value="ECO:0007669"/>
    <property type="project" value="UniProtKB-KW"/>
</dbReference>
<dbReference type="InterPro" id="IPR012948">
    <property type="entry name" value="AARP2CN"/>
</dbReference>
<dbReference type="InterPro" id="IPR039761">
    <property type="entry name" value="Bms1/Tsr1"/>
</dbReference>
<dbReference type="InterPro" id="IPR007034">
    <property type="entry name" value="BMS1_TSR1_C"/>
</dbReference>
<dbReference type="InterPro" id="IPR030387">
    <property type="entry name" value="G_Bms1/Tsr1_dom"/>
</dbReference>
<dbReference type="PANTHER" id="PTHR12858:SF1">
    <property type="entry name" value="PRE-RRNA-PROCESSING PROTEIN TSR1 HOMOLOG"/>
    <property type="match status" value="1"/>
</dbReference>
<dbReference type="PANTHER" id="PTHR12858">
    <property type="entry name" value="RIBOSOME BIOGENESIS PROTEIN"/>
    <property type="match status" value="1"/>
</dbReference>
<dbReference type="Pfam" id="PF08142">
    <property type="entry name" value="AARP2CN"/>
    <property type="match status" value="1"/>
</dbReference>
<dbReference type="Pfam" id="PF04950">
    <property type="entry name" value="RIBIOP_C"/>
    <property type="match status" value="1"/>
</dbReference>
<dbReference type="Pfam" id="PF22298">
    <property type="entry name" value="Tsr1_G-like"/>
    <property type="match status" value="1"/>
</dbReference>
<dbReference type="SMART" id="SM00785">
    <property type="entry name" value="AARP2CN"/>
    <property type="match status" value="1"/>
</dbReference>
<dbReference type="SMART" id="SM01362">
    <property type="entry name" value="DUF663"/>
    <property type="match status" value="1"/>
</dbReference>
<dbReference type="PROSITE" id="PS51714">
    <property type="entry name" value="G_BMS1"/>
    <property type="match status" value="1"/>
</dbReference>
<accession>Q5SWD9</accession>
<accession>Q3TMW6</accession>
<accession>Q3TRK6</accession>
<accession>Q3U4T2</accession>
<accession>Q3UYU4</accession>
<accession>Q3V3X8</accession>
<accession>Q6ZPR9</accession>
<accession>Q8K2F5</accession>
<organism>
    <name type="scientific">Mus musculus</name>
    <name type="common">Mouse</name>
    <dbReference type="NCBI Taxonomy" id="10090"/>
    <lineage>
        <taxon>Eukaryota</taxon>
        <taxon>Metazoa</taxon>
        <taxon>Chordata</taxon>
        <taxon>Craniata</taxon>
        <taxon>Vertebrata</taxon>
        <taxon>Euteleostomi</taxon>
        <taxon>Mammalia</taxon>
        <taxon>Eutheria</taxon>
        <taxon>Euarchontoglires</taxon>
        <taxon>Glires</taxon>
        <taxon>Rodentia</taxon>
        <taxon>Myomorpha</taxon>
        <taxon>Muroidea</taxon>
        <taxon>Muridae</taxon>
        <taxon>Murinae</taxon>
        <taxon>Mus</taxon>
        <taxon>Mus</taxon>
    </lineage>
</organism>
<evidence type="ECO:0000250" key="1"/>
<evidence type="ECO:0000255" key="2">
    <source>
        <dbReference type="PROSITE-ProRule" id="PRU01051"/>
    </source>
</evidence>
<evidence type="ECO:0000256" key="3">
    <source>
        <dbReference type="SAM" id="MobiDB-lite"/>
    </source>
</evidence>
<evidence type="ECO:0000303" key="4">
    <source>
    </source>
</evidence>
<evidence type="ECO:0000305" key="5"/>
<sequence length="803" mass="92105">MAAHRSGPLKQQNKAHKGGRHHGGGSAQRDSKGRVGPKILCKKLKRQLSRIDQRHRASQLRKQKRESVLAEKRQLGSKDGPPHQVLVVPLHSRISLPEAFKLLQNEDLGTVYLSERGSTQSFMLLCPSLKHRWFFTYARPGDLHTLLDMAKVADTILFLLDPLEGWDSTGDYCLSCLFAQGLPTYTLAVQGLSGFPPKKQIDARKKLSKMVEKRFPEDKLLLLDTQQESGMLLRQLANQKQRHLAFRDRRAYLFAHVADFVPSEESDLVGTLKISGYVRGRTLNVNSLLHIVGHGDFQMNQIDAPVDPFPLNPRVIKSQKKPNMAMEVCVTDAAPDMEEDLKVLMKADPDHQESLQTEAIPDPMEGEQTWPTEEELDEADDLLKQRSRVVKKVPKGTSSYQAEWILDEGDESDGEGGEYDDIQHEGFMEEESQDGSGEEEEEECETMTLGESVRDDLYDEKVDAEDEERMLEKYKQERLEEMFPDEMDTPRDVAARIRFQKYRGLKSFRTSPWDPKENLPRDYARIFQFQNFVNTRKRIFKEIEEKEAEGAEVGWYVTLHVSDVPVSVVEYFRQGAPLIAFSLLPYEQKMSVLNMVVSRNPGNTEPVKAKEELIFHCGFRRFRASPLFSQHTAADKHKFQRFLTADAAFVVTVFAPITFPPASVLLFKQRRNGMHSLIATGHLFSVDPDRMVIKRVVLSGHPFKIFTKMAVVRYMFFNREDVMWFKPVELRTKWGRRGHIKEPLGTHGHMKCSFDGKLKSQDTVLMNLYKRVFPKWTYDPYVPEPVPWVKSDISSTVSEVDME</sequence>
<gene>
    <name type="primary">Tsr1</name>
    <name type="synonym">Kiaa1401</name>
</gene>
<reference key="1">
    <citation type="journal article" date="2005" name="Science">
        <title>The transcriptional landscape of the mammalian genome.</title>
        <authorList>
            <person name="Carninci P."/>
            <person name="Kasukawa T."/>
            <person name="Katayama S."/>
            <person name="Gough J."/>
            <person name="Frith M.C."/>
            <person name="Maeda N."/>
            <person name="Oyama R."/>
            <person name="Ravasi T."/>
            <person name="Lenhard B."/>
            <person name="Wells C."/>
            <person name="Kodzius R."/>
            <person name="Shimokawa K."/>
            <person name="Bajic V.B."/>
            <person name="Brenner S.E."/>
            <person name="Batalov S."/>
            <person name="Forrest A.R."/>
            <person name="Zavolan M."/>
            <person name="Davis M.J."/>
            <person name="Wilming L.G."/>
            <person name="Aidinis V."/>
            <person name="Allen J.E."/>
            <person name="Ambesi-Impiombato A."/>
            <person name="Apweiler R."/>
            <person name="Aturaliya R.N."/>
            <person name="Bailey T.L."/>
            <person name="Bansal M."/>
            <person name="Baxter L."/>
            <person name="Beisel K.W."/>
            <person name="Bersano T."/>
            <person name="Bono H."/>
            <person name="Chalk A.M."/>
            <person name="Chiu K.P."/>
            <person name="Choudhary V."/>
            <person name="Christoffels A."/>
            <person name="Clutterbuck D.R."/>
            <person name="Crowe M.L."/>
            <person name="Dalla E."/>
            <person name="Dalrymple B.P."/>
            <person name="de Bono B."/>
            <person name="Della Gatta G."/>
            <person name="di Bernardo D."/>
            <person name="Down T."/>
            <person name="Engstrom P."/>
            <person name="Fagiolini M."/>
            <person name="Faulkner G."/>
            <person name="Fletcher C.F."/>
            <person name="Fukushima T."/>
            <person name="Furuno M."/>
            <person name="Futaki S."/>
            <person name="Gariboldi M."/>
            <person name="Georgii-Hemming P."/>
            <person name="Gingeras T.R."/>
            <person name="Gojobori T."/>
            <person name="Green R.E."/>
            <person name="Gustincich S."/>
            <person name="Harbers M."/>
            <person name="Hayashi Y."/>
            <person name="Hensch T.K."/>
            <person name="Hirokawa N."/>
            <person name="Hill D."/>
            <person name="Huminiecki L."/>
            <person name="Iacono M."/>
            <person name="Ikeo K."/>
            <person name="Iwama A."/>
            <person name="Ishikawa T."/>
            <person name="Jakt M."/>
            <person name="Kanapin A."/>
            <person name="Katoh M."/>
            <person name="Kawasawa Y."/>
            <person name="Kelso J."/>
            <person name="Kitamura H."/>
            <person name="Kitano H."/>
            <person name="Kollias G."/>
            <person name="Krishnan S.P."/>
            <person name="Kruger A."/>
            <person name="Kummerfeld S.K."/>
            <person name="Kurochkin I.V."/>
            <person name="Lareau L.F."/>
            <person name="Lazarevic D."/>
            <person name="Lipovich L."/>
            <person name="Liu J."/>
            <person name="Liuni S."/>
            <person name="McWilliam S."/>
            <person name="Madan Babu M."/>
            <person name="Madera M."/>
            <person name="Marchionni L."/>
            <person name="Matsuda H."/>
            <person name="Matsuzawa S."/>
            <person name="Miki H."/>
            <person name="Mignone F."/>
            <person name="Miyake S."/>
            <person name="Morris K."/>
            <person name="Mottagui-Tabar S."/>
            <person name="Mulder N."/>
            <person name="Nakano N."/>
            <person name="Nakauchi H."/>
            <person name="Ng P."/>
            <person name="Nilsson R."/>
            <person name="Nishiguchi S."/>
            <person name="Nishikawa S."/>
            <person name="Nori F."/>
            <person name="Ohara O."/>
            <person name="Okazaki Y."/>
            <person name="Orlando V."/>
            <person name="Pang K.C."/>
            <person name="Pavan W.J."/>
            <person name="Pavesi G."/>
            <person name="Pesole G."/>
            <person name="Petrovsky N."/>
            <person name="Piazza S."/>
            <person name="Reed J."/>
            <person name="Reid J.F."/>
            <person name="Ring B.Z."/>
            <person name="Ringwald M."/>
            <person name="Rost B."/>
            <person name="Ruan Y."/>
            <person name="Salzberg S.L."/>
            <person name="Sandelin A."/>
            <person name="Schneider C."/>
            <person name="Schoenbach C."/>
            <person name="Sekiguchi K."/>
            <person name="Semple C.A."/>
            <person name="Seno S."/>
            <person name="Sessa L."/>
            <person name="Sheng Y."/>
            <person name="Shibata Y."/>
            <person name="Shimada H."/>
            <person name="Shimada K."/>
            <person name="Silva D."/>
            <person name="Sinclair B."/>
            <person name="Sperling S."/>
            <person name="Stupka E."/>
            <person name="Sugiura K."/>
            <person name="Sultana R."/>
            <person name="Takenaka Y."/>
            <person name="Taki K."/>
            <person name="Tammoja K."/>
            <person name="Tan S.L."/>
            <person name="Tang S."/>
            <person name="Taylor M.S."/>
            <person name="Tegner J."/>
            <person name="Teichmann S.A."/>
            <person name="Ueda H.R."/>
            <person name="van Nimwegen E."/>
            <person name="Verardo R."/>
            <person name="Wei C.L."/>
            <person name="Yagi K."/>
            <person name="Yamanishi H."/>
            <person name="Zabarovsky E."/>
            <person name="Zhu S."/>
            <person name="Zimmer A."/>
            <person name="Hide W."/>
            <person name="Bult C."/>
            <person name="Grimmond S.M."/>
            <person name="Teasdale R.D."/>
            <person name="Liu E.T."/>
            <person name="Brusic V."/>
            <person name="Quackenbush J."/>
            <person name="Wahlestedt C."/>
            <person name="Mattick J.S."/>
            <person name="Hume D.A."/>
            <person name="Kai C."/>
            <person name="Sasaki D."/>
            <person name="Tomaru Y."/>
            <person name="Fukuda S."/>
            <person name="Kanamori-Katayama M."/>
            <person name="Suzuki M."/>
            <person name="Aoki J."/>
            <person name="Arakawa T."/>
            <person name="Iida J."/>
            <person name="Imamura K."/>
            <person name="Itoh M."/>
            <person name="Kato T."/>
            <person name="Kawaji H."/>
            <person name="Kawagashira N."/>
            <person name="Kawashima T."/>
            <person name="Kojima M."/>
            <person name="Kondo S."/>
            <person name="Konno H."/>
            <person name="Nakano K."/>
            <person name="Ninomiya N."/>
            <person name="Nishio T."/>
            <person name="Okada M."/>
            <person name="Plessy C."/>
            <person name="Shibata K."/>
            <person name="Shiraki T."/>
            <person name="Suzuki S."/>
            <person name="Tagami M."/>
            <person name="Waki K."/>
            <person name="Watahiki A."/>
            <person name="Okamura-Oho Y."/>
            <person name="Suzuki H."/>
            <person name="Kawai J."/>
            <person name="Hayashizaki Y."/>
        </authorList>
    </citation>
    <scope>NUCLEOTIDE SEQUENCE [LARGE SCALE MRNA] (ISOFORMS 1 AND 3)</scope>
    <scope>NUCLEOTIDE SEQUENCE [LARGE SCALE MRNA] OF 1-535 (ISOFORM 2)</scope>
    <source>
        <strain>C57BL/6J</strain>
        <strain>NOD</strain>
        <tissue>Pituitary</tissue>
        <tissue>Testis</tissue>
        <tissue>Thymus</tissue>
        <tissue>Vagina</tissue>
    </source>
</reference>
<reference key="2">
    <citation type="journal article" date="2009" name="PLoS Biol.">
        <title>Lineage-specific biology revealed by a finished genome assembly of the mouse.</title>
        <authorList>
            <person name="Church D.M."/>
            <person name="Goodstadt L."/>
            <person name="Hillier L.W."/>
            <person name="Zody M.C."/>
            <person name="Goldstein S."/>
            <person name="She X."/>
            <person name="Bult C.J."/>
            <person name="Agarwala R."/>
            <person name="Cherry J.L."/>
            <person name="DiCuccio M."/>
            <person name="Hlavina W."/>
            <person name="Kapustin Y."/>
            <person name="Meric P."/>
            <person name="Maglott D."/>
            <person name="Birtle Z."/>
            <person name="Marques A.C."/>
            <person name="Graves T."/>
            <person name="Zhou S."/>
            <person name="Teague B."/>
            <person name="Potamousis K."/>
            <person name="Churas C."/>
            <person name="Place M."/>
            <person name="Herschleb J."/>
            <person name="Runnheim R."/>
            <person name="Forrest D."/>
            <person name="Amos-Landgraf J."/>
            <person name="Schwartz D.C."/>
            <person name="Cheng Z."/>
            <person name="Lindblad-Toh K."/>
            <person name="Eichler E.E."/>
            <person name="Ponting C.P."/>
        </authorList>
    </citation>
    <scope>NUCLEOTIDE SEQUENCE [LARGE SCALE GENOMIC DNA]</scope>
    <source>
        <strain>C57BL/6J</strain>
    </source>
</reference>
<reference key="3">
    <citation type="journal article" date="2004" name="Genome Res.">
        <title>The status, quality, and expansion of the NIH full-length cDNA project: the Mammalian Gene Collection (MGC).</title>
        <authorList>
            <consortium name="The MGC Project Team"/>
        </authorList>
    </citation>
    <scope>NUCLEOTIDE SEQUENCE [LARGE SCALE MRNA] (ISOFORM 1)</scope>
    <source>
        <strain>Czech II</strain>
        <tissue>Mammary tumor</tissue>
    </source>
</reference>
<reference key="4">
    <citation type="journal article" date="2003" name="DNA Res.">
        <title>Prediction of the coding sequences of mouse homologues of KIAA gene: III. The complete nucleotide sequences of 500 mouse KIAA-homologous cDNAs identified by screening of terminal sequences of cDNA clones randomly sampled from size-fractionated libraries.</title>
        <authorList>
            <person name="Okazaki N."/>
            <person name="Kikuno R."/>
            <person name="Ohara R."/>
            <person name="Inamoto S."/>
            <person name="Koseki H."/>
            <person name="Hiraoka S."/>
            <person name="Saga Y."/>
            <person name="Nagase T."/>
            <person name="Ohara O."/>
            <person name="Koga H."/>
        </authorList>
    </citation>
    <scope>NUCLEOTIDE SEQUENCE [LARGE SCALE MRNA] OF 4-803 (ISOFORM 1)</scope>
</reference>
<reference key="5">
    <citation type="journal article" date="2010" name="Cell">
        <title>A tissue-specific atlas of mouse protein phosphorylation and expression.</title>
        <authorList>
            <person name="Huttlin E.L."/>
            <person name="Jedrychowski M.P."/>
            <person name="Elias J.E."/>
            <person name="Goswami T."/>
            <person name="Rad R."/>
            <person name="Beausoleil S.A."/>
            <person name="Villen J."/>
            <person name="Haas W."/>
            <person name="Sowa M.E."/>
            <person name="Gygi S.P."/>
        </authorList>
    </citation>
    <scope>IDENTIFICATION BY MASS SPECTROMETRY [LARGE SCALE ANALYSIS]</scope>
    <source>
        <tissue>Liver</tissue>
        <tissue>Lung</tissue>
        <tissue>Pancreas</tissue>
        <tissue>Spleen</tissue>
        <tissue>Testis</tissue>
    </source>
</reference>